<evidence type="ECO:0000255" key="1">
    <source>
        <dbReference type="HAMAP-Rule" id="MF_00019"/>
    </source>
</evidence>
<evidence type="ECO:0000256" key="2">
    <source>
        <dbReference type="SAM" id="MobiDB-lite"/>
    </source>
</evidence>
<reference key="1">
    <citation type="journal article" date="2010" name="ISME J.">
        <title>The complete genome sequence of the algal symbiont Dinoroseobacter shibae: a hitchhiker's guide to life in the sea.</title>
        <authorList>
            <person name="Wagner-Dobler I."/>
            <person name="Ballhausen B."/>
            <person name="Berger M."/>
            <person name="Brinkhoff T."/>
            <person name="Buchholz I."/>
            <person name="Bunk B."/>
            <person name="Cypionka H."/>
            <person name="Daniel R."/>
            <person name="Drepper T."/>
            <person name="Gerdts G."/>
            <person name="Hahnke S."/>
            <person name="Han C."/>
            <person name="Jahn D."/>
            <person name="Kalhoefer D."/>
            <person name="Kiss H."/>
            <person name="Klenk H.P."/>
            <person name="Kyrpides N."/>
            <person name="Liebl W."/>
            <person name="Liesegang H."/>
            <person name="Meincke L."/>
            <person name="Pati A."/>
            <person name="Petersen J."/>
            <person name="Piekarski T."/>
            <person name="Pommerenke C."/>
            <person name="Pradella S."/>
            <person name="Pukall R."/>
            <person name="Rabus R."/>
            <person name="Stackebrandt E."/>
            <person name="Thole S."/>
            <person name="Thompson L."/>
            <person name="Tielen P."/>
            <person name="Tomasch J."/>
            <person name="von Jan M."/>
            <person name="Wanphrut N."/>
            <person name="Wichels A."/>
            <person name="Zech H."/>
            <person name="Simon M."/>
        </authorList>
    </citation>
    <scope>NUCLEOTIDE SEQUENCE [LARGE SCALE GENOMIC DNA]</scope>
    <source>
        <strain>DSM 16493 / NCIMB 14021 / DFL 12</strain>
    </source>
</reference>
<dbReference type="EC" id="2.3.1.274" evidence="1"/>
<dbReference type="EMBL" id="CP000830">
    <property type="protein sequence ID" value="ABV93461.1"/>
    <property type="molecule type" value="Genomic_DNA"/>
</dbReference>
<dbReference type="RefSeq" id="WP_012178391.1">
    <property type="nucleotide sequence ID" value="NC_009952.1"/>
</dbReference>
<dbReference type="SMR" id="A8LLT3"/>
<dbReference type="STRING" id="398580.Dshi_1719"/>
<dbReference type="KEGG" id="dsh:Dshi_1719"/>
<dbReference type="eggNOG" id="COG0416">
    <property type="taxonomic scope" value="Bacteria"/>
</dbReference>
<dbReference type="HOGENOM" id="CLU_039379_1_0_5"/>
<dbReference type="UniPathway" id="UPA00085"/>
<dbReference type="Proteomes" id="UP000006833">
    <property type="component" value="Chromosome"/>
</dbReference>
<dbReference type="GO" id="GO:0005737">
    <property type="term" value="C:cytoplasm"/>
    <property type="evidence" value="ECO:0007669"/>
    <property type="project" value="UniProtKB-SubCell"/>
</dbReference>
<dbReference type="GO" id="GO:0043811">
    <property type="term" value="F:phosphate:acyl-[acyl carrier protein] acyltransferase activity"/>
    <property type="evidence" value="ECO:0007669"/>
    <property type="project" value="UniProtKB-UniRule"/>
</dbReference>
<dbReference type="GO" id="GO:0006633">
    <property type="term" value="P:fatty acid biosynthetic process"/>
    <property type="evidence" value="ECO:0007669"/>
    <property type="project" value="UniProtKB-UniRule"/>
</dbReference>
<dbReference type="GO" id="GO:0008654">
    <property type="term" value="P:phospholipid biosynthetic process"/>
    <property type="evidence" value="ECO:0007669"/>
    <property type="project" value="UniProtKB-KW"/>
</dbReference>
<dbReference type="Gene3D" id="3.40.718.10">
    <property type="entry name" value="Isopropylmalate Dehydrogenase"/>
    <property type="match status" value="1"/>
</dbReference>
<dbReference type="HAMAP" id="MF_00019">
    <property type="entry name" value="PlsX"/>
    <property type="match status" value="1"/>
</dbReference>
<dbReference type="InterPro" id="IPR003664">
    <property type="entry name" value="FA_synthesis"/>
</dbReference>
<dbReference type="InterPro" id="IPR012281">
    <property type="entry name" value="Phospholipid_synth_PlsX-like"/>
</dbReference>
<dbReference type="NCBIfam" id="TIGR00182">
    <property type="entry name" value="plsX"/>
    <property type="match status" value="1"/>
</dbReference>
<dbReference type="PANTHER" id="PTHR30100">
    <property type="entry name" value="FATTY ACID/PHOSPHOLIPID SYNTHESIS PROTEIN PLSX"/>
    <property type="match status" value="1"/>
</dbReference>
<dbReference type="PANTHER" id="PTHR30100:SF1">
    <property type="entry name" value="PHOSPHATE ACYLTRANSFERASE"/>
    <property type="match status" value="1"/>
</dbReference>
<dbReference type="Pfam" id="PF02504">
    <property type="entry name" value="FA_synthesis"/>
    <property type="match status" value="1"/>
</dbReference>
<dbReference type="PIRSF" id="PIRSF002465">
    <property type="entry name" value="Phsphlp_syn_PlsX"/>
    <property type="match status" value="1"/>
</dbReference>
<dbReference type="SUPFAM" id="SSF53659">
    <property type="entry name" value="Isocitrate/Isopropylmalate dehydrogenase-like"/>
    <property type="match status" value="1"/>
</dbReference>
<keyword id="KW-0963">Cytoplasm</keyword>
<keyword id="KW-0444">Lipid biosynthesis</keyword>
<keyword id="KW-0443">Lipid metabolism</keyword>
<keyword id="KW-0594">Phospholipid biosynthesis</keyword>
<keyword id="KW-1208">Phospholipid metabolism</keyword>
<keyword id="KW-1185">Reference proteome</keyword>
<keyword id="KW-0808">Transferase</keyword>
<protein>
    <recommendedName>
        <fullName evidence="1">Phosphate acyltransferase</fullName>
        <ecNumber evidence="1">2.3.1.274</ecNumber>
    </recommendedName>
    <alternativeName>
        <fullName evidence="1">Acyl-ACP phosphotransacylase</fullName>
    </alternativeName>
    <alternativeName>
        <fullName evidence="1">Acyl-[acyl-carrier-protein]--phosphate acyltransferase</fullName>
    </alternativeName>
    <alternativeName>
        <fullName evidence="1">Phosphate-acyl-ACP acyltransferase</fullName>
    </alternativeName>
</protein>
<comment type="function">
    <text evidence="1">Catalyzes the reversible formation of acyl-phosphate (acyl-PO(4)) from acyl-[acyl-carrier-protein] (acyl-ACP). This enzyme utilizes acyl-ACP as fatty acyl donor, but not acyl-CoA.</text>
</comment>
<comment type="catalytic activity">
    <reaction evidence="1">
        <text>a fatty acyl-[ACP] + phosphate = an acyl phosphate + holo-[ACP]</text>
        <dbReference type="Rhea" id="RHEA:42292"/>
        <dbReference type="Rhea" id="RHEA-COMP:9685"/>
        <dbReference type="Rhea" id="RHEA-COMP:14125"/>
        <dbReference type="ChEBI" id="CHEBI:43474"/>
        <dbReference type="ChEBI" id="CHEBI:59918"/>
        <dbReference type="ChEBI" id="CHEBI:64479"/>
        <dbReference type="ChEBI" id="CHEBI:138651"/>
        <dbReference type="EC" id="2.3.1.274"/>
    </reaction>
</comment>
<comment type="pathway">
    <text evidence="1">Lipid metabolism; phospholipid metabolism.</text>
</comment>
<comment type="subunit">
    <text evidence="1">Homodimer. Probably interacts with PlsY.</text>
</comment>
<comment type="subcellular location">
    <subcellularLocation>
        <location evidence="1">Cytoplasm</location>
    </subcellularLocation>
    <text evidence="1">Associated with the membrane possibly through PlsY.</text>
</comment>
<comment type="similarity">
    <text evidence="1">Belongs to the PlsX family.</text>
</comment>
<sequence length="385" mass="39589">MAAGTSIGTTPGGSTSPETPPEHGLTGTVISVDAMGGDTGPAAVVGGLAIAAEKNPDIAFLLHGDATELTALVAKRRALDGRVAIRGTSDVVTMHDKPSQVMRGGKDTSMWSAIDAVRNGEATVCVSCGNTGALMALSMVRLRKVPGINRPAIACLWPSRAKSGFNVMLDVGADIKADAQDLLQYALMGASYARNGLGNPTPRIGLLNVGTEEHKGRAELKAAHDLIAQAAPDNDFEFVGFVEGGDIPSDKVDVIVTDGFTGNVALKTAEGTAALIRDFLTQAFEKTPWSKIAAMLAYTSLRRLSKRIDPRRVNGGVFLGLNGTVVKSHGSADATGVAAAIKLAFILAQSGFTERLAARVASAGRARASGAATPEEEAVSGSANG</sequence>
<accession>A8LLT3</accession>
<name>PLSX_DINSH</name>
<proteinExistence type="inferred from homology"/>
<gene>
    <name evidence="1" type="primary">plsX</name>
    <name type="ordered locus">Dshi_1719</name>
</gene>
<organism>
    <name type="scientific">Dinoroseobacter shibae (strain DSM 16493 / NCIMB 14021 / DFL 12)</name>
    <dbReference type="NCBI Taxonomy" id="398580"/>
    <lineage>
        <taxon>Bacteria</taxon>
        <taxon>Pseudomonadati</taxon>
        <taxon>Pseudomonadota</taxon>
        <taxon>Alphaproteobacteria</taxon>
        <taxon>Rhodobacterales</taxon>
        <taxon>Roseobacteraceae</taxon>
        <taxon>Dinoroseobacter</taxon>
    </lineage>
</organism>
<feature type="chain" id="PRO_0000329224" description="Phosphate acyltransferase">
    <location>
        <begin position="1"/>
        <end position="385"/>
    </location>
</feature>
<feature type="region of interest" description="Disordered" evidence="2">
    <location>
        <begin position="1"/>
        <end position="28"/>
    </location>
</feature>
<feature type="compositionally biased region" description="Low complexity" evidence="2">
    <location>
        <begin position="1"/>
        <end position="17"/>
    </location>
</feature>